<sequence>MTAKPLRTVLSLLFFALSGVLGTPEISCRNEYGEAVDWFIFYKLPKRTSKASEEAGLQYLYLDSTRQTWNKSLYLINSTRSALGRTLQHLYDTHNSTNDTAYLIYNDGVPGSVNYSRQYGHAKGLLVWNRTQGFWLIHSVPKFPPVHGYEYPTSGRRYGQTGICITFGYSQFEEIDFQLLVLQPNIYSCFIPSTFHWKLIYMPRMCANSSSLKIPVRYLAELHSAQGLNFVHFAKSSFYTDDIFTGWIAQKLKTHLLAQTWQKKKQELPSNCSLPYHVYNIKSIGVTSKSYFSSRQDHSKWCVSIKGSANRWTCIGDLNRSLHQALRGGGFICTKNHYIYQAFHKLYLRYGFCK</sequence>
<comment type="function">
    <text evidence="2 3">Hydrolyzes DNA under acidic conditions. Does not require divalent cations for activity. Participates in the degradation of nuclear DNA during lens cell differentiation.</text>
</comment>
<comment type="catalytic activity">
    <reaction>
        <text>Endonucleolytic cleavage to nucleoside 3'-phosphates and 3'-phosphooligonucleotide end-products.</text>
        <dbReference type="EC" id="3.1.22.1"/>
    </reaction>
</comment>
<comment type="subcellular location">
    <subcellularLocation>
        <location evidence="4">Lysosome</location>
    </subcellularLocation>
</comment>
<comment type="tissue specificity">
    <text evidence="2 3">Highly expressed in the eye lens. Detected in liver, but not in the other tissues tested.</text>
</comment>
<comment type="miscellaneous">
    <text>Inhibited by aurintricarboxylic acid and Zn(2+).</text>
</comment>
<comment type="similarity">
    <text evidence="4">Belongs to the DNase II family.</text>
</comment>
<keyword id="KW-0255">Endonuclease</keyword>
<keyword id="KW-0325">Glycoprotein</keyword>
<keyword id="KW-0378">Hydrolase</keyword>
<keyword id="KW-0458">Lysosome</keyword>
<keyword id="KW-0540">Nuclease</keyword>
<keyword id="KW-1185">Reference proteome</keyword>
<keyword id="KW-0732">Signal</keyword>
<organism>
    <name type="scientific">Mus musculus</name>
    <name type="common">Mouse</name>
    <dbReference type="NCBI Taxonomy" id="10090"/>
    <lineage>
        <taxon>Eukaryota</taxon>
        <taxon>Metazoa</taxon>
        <taxon>Chordata</taxon>
        <taxon>Craniata</taxon>
        <taxon>Vertebrata</taxon>
        <taxon>Euteleostomi</taxon>
        <taxon>Mammalia</taxon>
        <taxon>Eutheria</taxon>
        <taxon>Euarchontoglires</taxon>
        <taxon>Glires</taxon>
        <taxon>Rodentia</taxon>
        <taxon>Myomorpha</taxon>
        <taxon>Muroidea</taxon>
        <taxon>Muridae</taxon>
        <taxon>Murinae</taxon>
        <taxon>Mus</taxon>
        <taxon>Mus</taxon>
    </lineage>
</organism>
<feature type="signal peptide" evidence="1">
    <location>
        <begin position="1"/>
        <end position="22"/>
    </location>
</feature>
<feature type="chain" id="PRO_0000007296" description="Deoxyribonuclease-2-beta">
    <location>
        <begin position="23"/>
        <end position="354"/>
    </location>
</feature>
<feature type="glycosylation site" description="N-linked (GlcNAc...) asparagine" evidence="1">
    <location>
        <position position="70"/>
    </location>
</feature>
<feature type="glycosylation site" description="N-linked (GlcNAc...) asparagine" evidence="1">
    <location>
        <position position="77"/>
    </location>
</feature>
<feature type="glycosylation site" description="N-linked (GlcNAc...) asparagine" evidence="1">
    <location>
        <position position="95"/>
    </location>
</feature>
<feature type="glycosylation site" description="N-linked (GlcNAc...) asparagine" evidence="1">
    <location>
        <position position="98"/>
    </location>
</feature>
<feature type="glycosylation site" description="N-linked (GlcNAc...) asparagine" evidence="1">
    <location>
        <position position="114"/>
    </location>
</feature>
<feature type="glycosylation site" description="N-linked (GlcNAc...) asparagine" evidence="1">
    <location>
        <position position="129"/>
    </location>
</feature>
<feature type="glycosylation site" description="N-linked (GlcNAc...) asparagine" evidence="1">
    <location>
        <position position="208"/>
    </location>
</feature>
<feature type="glycosylation site" description="N-linked (GlcNAc...) asparagine" evidence="1">
    <location>
        <position position="271"/>
    </location>
</feature>
<feature type="glycosylation site" description="N-linked (GlcNAc...) asparagine" evidence="1">
    <location>
        <position position="319"/>
    </location>
</feature>
<feature type="sequence conflict" description="In Ref. 3; BAC37579." evidence="4" ref="3">
    <original>R</original>
    <variation>K</variation>
    <location>
        <position position="85"/>
    </location>
</feature>
<reference key="1">
    <citation type="journal article" date="1999" name="Nucleic Acids Res.">
        <title>DLAD, a novel mammalian divalent cation-independent endonuclease with homology to DNase II.</title>
        <authorList>
            <person name="Shiokawa D."/>
            <person name="Tanuma S."/>
        </authorList>
    </citation>
    <scope>NUCLEOTIDE SEQUENCE [MRNA]</scope>
    <scope>FUNCTION</scope>
    <scope>TISSUE SPECIFICITY</scope>
    <source>
        <strain>C57BL/6J</strain>
        <tissue>Liver</tissue>
    </source>
</reference>
<reference key="2">
    <citation type="journal article" date="2001" name="Biochem. Biophys. Res. Commun.">
        <title>Isolation and characterization of the DLAD/Dlad genes, which lie head-to-head with the genes for urate oxidase.</title>
        <authorList>
            <person name="Shiokawa D."/>
            <person name="Tanuma S."/>
        </authorList>
    </citation>
    <scope>NUCLEOTIDE SEQUENCE [GENOMIC DNA]</scope>
    <source>
        <strain>C57BL/6J</strain>
    </source>
</reference>
<reference key="3">
    <citation type="journal article" date="2005" name="Science">
        <title>The transcriptional landscape of the mammalian genome.</title>
        <authorList>
            <person name="Carninci P."/>
            <person name="Kasukawa T."/>
            <person name="Katayama S."/>
            <person name="Gough J."/>
            <person name="Frith M.C."/>
            <person name="Maeda N."/>
            <person name="Oyama R."/>
            <person name="Ravasi T."/>
            <person name="Lenhard B."/>
            <person name="Wells C."/>
            <person name="Kodzius R."/>
            <person name="Shimokawa K."/>
            <person name="Bajic V.B."/>
            <person name="Brenner S.E."/>
            <person name="Batalov S."/>
            <person name="Forrest A.R."/>
            <person name="Zavolan M."/>
            <person name="Davis M.J."/>
            <person name="Wilming L.G."/>
            <person name="Aidinis V."/>
            <person name="Allen J.E."/>
            <person name="Ambesi-Impiombato A."/>
            <person name="Apweiler R."/>
            <person name="Aturaliya R.N."/>
            <person name="Bailey T.L."/>
            <person name="Bansal M."/>
            <person name="Baxter L."/>
            <person name="Beisel K.W."/>
            <person name="Bersano T."/>
            <person name="Bono H."/>
            <person name="Chalk A.M."/>
            <person name="Chiu K.P."/>
            <person name="Choudhary V."/>
            <person name="Christoffels A."/>
            <person name="Clutterbuck D.R."/>
            <person name="Crowe M.L."/>
            <person name="Dalla E."/>
            <person name="Dalrymple B.P."/>
            <person name="de Bono B."/>
            <person name="Della Gatta G."/>
            <person name="di Bernardo D."/>
            <person name="Down T."/>
            <person name="Engstrom P."/>
            <person name="Fagiolini M."/>
            <person name="Faulkner G."/>
            <person name="Fletcher C.F."/>
            <person name="Fukushima T."/>
            <person name="Furuno M."/>
            <person name="Futaki S."/>
            <person name="Gariboldi M."/>
            <person name="Georgii-Hemming P."/>
            <person name="Gingeras T.R."/>
            <person name="Gojobori T."/>
            <person name="Green R.E."/>
            <person name="Gustincich S."/>
            <person name="Harbers M."/>
            <person name="Hayashi Y."/>
            <person name="Hensch T.K."/>
            <person name="Hirokawa N."/>
            <person name="Hill D."/>
            <person name="Huminiecki L."/>
            <person name="Iacono M."/>
            <person name="Ikeo K."/>
            <person name="Iwama A."/>
            <person name="Ishikawa T."/>
            <person name="Jakt M."/>
            <person name="Kanapin A."/>
            <person name="Katoh M."/>
            <person name="Kawasawa Y."/>
            <person name="Kelso J."/>
            <person name="Kitamura H."/>
            <person name="Kitano H."/>
            <person name="Kollias G."/>
            <person name="Krishnan S.P."/>
            <person name="Kruger A."/>
            <person name="Kummerfeld S.K."/>
            <person name="Kurochkin I.V."/>
            <person name="Lareau L.F."/>
            <person name="Lazarevic D."/>
            <person name="Lipovich L."/>
            <person name="Liu J."/>
            <person name="Liuni S."/>
            <person name="McWilliam S."/>
            <person name="Madan Babu M."/>
            <person name="Madera M."/>
            <person name="Marchionni L."/>
            <person name="Matsuda H."/>
            <person name="Matsuzawa S."/>
            <person name="Miki H."/>
            <person name="Mignone F."/>
            <person name="Miyake S."/>
            <person name="Morris K."/>
            <person name="Mottagui-Tabar S."/>
            <person name="Mulder N."/>
            <person name="Nakano N."/>
            <person name="Nakauchi H."/>
            <person name="Ng P."/>
            <person name="Nilsson R."/>
            <person name="Nishiguchi S."/>
            <person name="Nishikawa S."/>
            <person name="Nori F."/>
            <person name="Ohara O."/>
            <person name="Okazaki Y."/>
            <person name="Orlando V."/>
            <person name="Pang K.C."/>
            <person name="Pavan W.J."/>
            <person name="Pavesi G."/>
            <person name="Pesole G."/>
            <person name="Petrovsky N."/>
            <person name="Piazza S."/>
            <person name="Reed J."/>
            <person name="Reid J.F."/>
            <person name="Ring B.Z."/>
            <person name="Ringwald M."/>
            <person name="Rost B."/>
            <person name="Ruan Y."/>
            <person name="Salzberg S.L."/>
            <person name="Sandelin A."/>
            <person name="Schneider C."/>
            <person name="Schoenbach C."/>
            <person name="Sekiguchi K."/>
            <person name="Semple C.A."/>
            <person name="Seno S."/>
            <person name="Sessa L."/>
            <person name="Sheng Y."/>
            <person name="Shibata Y."/>
            <person name="Shimada H."/>
            <person name="Shimada K."/>
            <person name="Silva D."/>
            <person name="Sinclair B."/>
            <person name="Sperling S."/>
            <person name="Stupka E."/>
            <person name="Sugiura K."/>
            <person name="Sultana R."/>
            <person name="Takenaka Y."/>
            <person name="Taki K."/>
            <person name="Tammoja K."/>
            <person name="Tan S.L."/>
            <person name="Tang S."/>
            <person name="Taylor M.S."/>
            <person name="Tegner J."/>
            <person name="Teichmann S.A."/>
            <person name="Ueda H.R."/>
            <person name="van Nimwegen E."/>
            <person name="Verardo R."/>
            <person name="Wei C.L."/>
            <person name="Yagi K."/>
            <person name="Yamanishi H."/>
            <person name="Zabarovsky E."/>
            <person name="Zhu S."/>
            <person name="Zimmer A."/>
            <person name="Hide W."/>
            <person name="Bult C."/>
            <person name="Grimmond S.M."/>
            <person name="Teasdale R.D."/>
            <person name="Liu E.T."/>
            <person name="Brusic V."/>
            <person name="Quackenbush J."/>
            <person name="Wahlestedt C."/>
            <person name="Mattick J.S."/>
            <person name="Hume D.A."/>
            <person name="Kai C."/>
            <person name="Sasaki D."/>
            <person name="Tomaru Y."/>
            <person name="Fukuda S."/>
            <person name="Kanamori-Katayama M."/>
            <person name="Suzuki M."/>
            <person name="Aoki J."/>
            <person name="Arakawa T."/>
            <person name="Iida J."/>
            <person name="Imamura K."/>
            <person name="Itoh M."/>
            <person name="Kato T."/>
            <person name="Kawaji H."/>
            <person name="Kawagashira N."/>
            <person name="Kawashima T."/>
            <person name="Kojima M."/>
            <person name="Kondo S."/>
            <person name="Konno H."/>
            <person name="Nakano K."/>
            <person name="Ninomiya N."/>
            <person name="Nishio T."/>
            <person name="Okada M."/>
            <person name="Plessy C."/>
            <person name="Shibata K."/>
            <person name="Shiraki T."/>
            <person name="Suzuki S."/>
            <person name="Tagami M."/>
            <person name="Waki K."/>
            <person name="Watahiki A."/>
            <person name="Okamura-Oho Y."/>
            <person name="Suzuki H."/>
            <person name="Kawai J."/>
            <person name="Hayashizaki Y."/>
        </authorList>
    </citation>
    <scope>NUCLEOTIDE SEQUENCE [LARGE SCALE MRNA]</scope>
    <source>
        <strain>C57BL/6J</strain>
        <tissue>Urinary bladder</tissue>
    </source>
</reference>
<reference key="4">
    <citation type="journal article" date="2004" name="Genome Res.">
        <title>The status, quality, and expansion of the NIH full-length cDNA project: the Mammalian Gene Collection (MGC).</title>
        <authorList>
            <consortium name="The MGC Project Team"/>
        </authorList>
    </citation>
    <scope>NUCLEOTIDE SEQUENCE [LARGE SCALE MRNA]</scope>
    <source>
        <strain>C57BL/6J</strain>
        <tissue>Eye</tissue>
    </source>
</reference>
<reference key="5">
    <citation type="journal article" date="2003" name="Nature">
        <title>Nuclear cataract caused by a lack of DNA degradation in the mouse eye lens.</title>
        <authorList>
            <person name="Nishimoto S."/>
            <person name="Kawane K."/>
            <person name="Watanabe-Fukunaga R."/>
            <person name="Fukuyama H."/>
            <person name="Ohsawa Y."/>
            <person name="Uchiyama Y."/>
            <person name="Hashida N."/>
            <person name="Ohguro N."/>
            <person name="Tano Y."/>
            <person name="Morimoto T."/>
            <person name="Fukuda Y."/>
            <person name="Nagata S."/>
        </authorList>
    </citation>
    <scope>FUNCTION</scope>
    <scope>TISSUE SPECIFICITY</scope>
</reference>
<gene>
    <name type="primary">Dnase2b</name>
    <name type="synonym">Dlad</name>
</gene>
<name>DNS2B_MOUSE</name>
<proteinExistence type="evidence at transcript level"/>
<protein>
    <recommendedName>
        <fullName>Deoxyribonuclease-2-beta</fullName>
        <ecNumber>3.1.22.1</ecNumber>
    </recommendedName>
    <alternativeName>
        <fullName>DNase II-like acid DNase</fullName>
    </alternativeName>
    <alternativeName>
        <fullName>DNase2-like acid DNase</fullName>
    </alternativeName>
    <alternativeName>
        <fullName>Deoxyribonuclease II beta</fullName>
        <shortName>DNase II beta</shortName>
    </alternativeName>
    <alternativeName>
        <fullName>Endonuclease DLAD</fullName>
    </alternativeName>
</protein>
<accession>Q9QY48</accession>
<accession>Q8C589</accession>
<evidence type="ECO:0000255" key="1"/>
<evidence type="ECO:0000269" key="2">
    <source>
    </source>
</evidence>
<evidence type="ECO:0000269" key="3">
    <source>
    </source>
</evidence>
<evidence type="ECO:0000305" key="4"/>
<dbReference type="EC" id="3.1.22.1"/>
<dbReference type="EMBL" id="AF128888">
    <property type="protein sequence ID" value="AAF05082.1"/>
    <property type="molecule type" value="mRNA"/>
</dbReference>
<dbReference type="EMBL" id="AF334608">
    <property type="protein sequence ID" value="AAL34450.1"/>
    <property type="molecule type" value="Genomic_DNA"/>
</dbReference>
<dbReference type="EMBL" id="AF334603">
    <property type="protein sequence ID" value="AAL34450.1"/>
    <property type="status" value="JOINED"/>
    <property type="molecule type" value="Genomic_DNA"/>
</dbReference>
<dbReference type="EMBL" id="AF334604">
    <property type="protein sequence ID" value="AAL34450.1"/>
    <property type="status" value="JOINED"/>
    <property type="molecule type" value="Genomic_DNA"/>
</dbReference>
<dbReference type="EMBL" id="AF334605">
    <property type="protein sequence ID" value="AAL34450.1"/>
    <property type="status" value="JOINED"/>
    <property type="molecule type" value="Genomic_DNA"/>
</dbReference>
<dbReference type="EMBL" id="AF334606">
    <property type="protein sequence ID" value="AAL34450.1"/>
    <property type="status" value="JOINED"/>
    <property type="molecule type" value="Genomic_DNA"/>
</dbReference>
<dbReference type="EMBL" id="AF334607">
    <property type="protein sequence ID" value="AAL34450.1"/>
    <property type="status" value="JOINED"/>
    <property type="molecule type" value="Genomic_DNA"/>
</dbReference>
<dbReference type="EMBL" id="AK079224">
    <property type="protein sequence ID" value="BAC37579.1"/>
    <property type="molecule type" value="mRNA"/>
</dbReference>
<dbReference type="EMBL" id="BC075661">
    <property type="protein sequence ID" value="AAH75661.1"/>
    <property type="molecule type" value="mRNA"/>
</dbReference>
<dbReference type="CCDS" id="CCDS17904.1"/>
<dbReference type="RefSeq" id="NP_001398343.1">
    <property type="nucleotide sequence ID" value="NM_001411414.1"/>
</dbReference>
<dbReference type="RefSeq" id="NP_001398344.1">
    <property type="nucleotide sequence ID" value="NM_001411415.1"/>
</dbReference>
<dbReference type="RefSeq" id="NP_064341.3">
    <property type="nucleotide sequence ID" value="NM_019957.4"/>
</dbReference>
<dbReference type="RefSeq" id="XP_006501826.1">
    <property type="nucleotide sequence ID" value="XM_006501763.3"/>
</dbReference>
<dbReference type="RefSeq" id="XP_006501827.1">
    <property type="nucleotide sequence ID" value="XM_006501764.2"/>
</dbReference>
<dbReference type="RefSeq" id="XP_011238473.1">
    <property type="nucleotide sequence ID" value="XM_011240171.2"/>
</dbReference>
<dbReference type="RefSeq" id="XP_011238474.1">
    <property type="nucleotide sequence ID" value="XM_011240172.2"/>
</dbReference>
<dbReference type="SMR" id="Q9QY48"/>
<dbReference type="FunCoup" id="Q9QY48">
    <property type="interactions" value="226"/>
</dbReference>
<dbReference type="STRING" id="10090.ENSMUSP00000142872"/>
<dbReference type="GlyCosmos" id="Q9QY48">
    <property type="glycosylation" value="9 sites, No reported glycans"/>
</dbReference>
<dbReference type="GlyGen" id="Q9QY48">
    <property type="glycosylation" value="9 sites"/>
</dbReference>
<dbReference type="PhosphoSitePlus" id="Q9QY48"/>
<dbReference type="PaxDb" id="10090-ENSMUSP00000029836"/>
<dbReference type="ProteomicsDB" id="279553"/>
<dbReference type="Antibodypedia" id="19765">
    <property type="antibodies" value="95 antibodies from 20 providers"/>
</dbReference>
<dbReference type="DNASU" id="56629"/>
<dbReference type="Ensembl" id="ENSMUST00000029836.9">
    <property type="protein sequence ID" value="ENSMUSP00000029836.5"/>
    <property type="gene ID" value="ENSMUSG00000028185.13"/>
</dbReference>
<dbReference type="Ensembl" id="ENSMUST00000200633.2">
    <property type="protein sequence ID" value="ENSMUSP00000142872.2"/>
    <property type="gene ID" value="ENSMUSG00000028185.13"/>
</dbReference>
<dbReference type="GeneID" id="56629"/>
<dbReference type="KEGG" id="mmu:56629"/>
<dbReference type="UCSC" id="uc008rrn.2">
    <property type="organism name" value="mouse"/>
</dbReference>
<dbReference type="AGR" id="MGI:1913283"/>
<dbReference type="CTD" id="58511"/>
<dbReference type="MGI" id="MGI:1913283">
    <property type="gene designation" value="Dnase2b"/>
</dbReference>
<dbReference type="VEuPathDB" id="HostDB:ENSMUSG00000028185"/>
<dbReference type="eggNOG" id="KOG3825">
    <property type="taxonomic scope" value="Eukaryota"/>
</dbReference>
<dbReference type="GeneTree" id="ENSGT00390000002634"/>
<dbReference type="HOGENOM" id="CLU_053867_0_0_1"/>
<dbReference type="InParanoid" id="Q9QY48"/>
<dbReference type="OMA" id="HMPQLCA"/>
<dbReference type="OrthoDB" id="10261598at2759"/>
<dbReference type="PhylomeDB" id="Q9QY48"/>
<dbReference type="TreeFam" id="TF314536"/>
<dbReference type="BRENDA" id="3.1.22.1">
    <property type="organism ID" value="3474"/>
</dbReference>
<dbReference type="BioGRID-ORCS" id="56629">
    <property type="hits" value="2 hits in 78 CRISPR screens"/>
</dbReference>
<dbReference type="ChiTaRS" id="Dnase2b">
    <property type="organism name" value="mouse"/>
</dbReference>
<dbReference type="PRO" id="PR:Q9QY48"/>
<dbReference type="Proteomes" id="UP000000589">
    <property type="component" value="Chromosome 3"/>
</dbReference>
<dbReference type="RNAct" id="Q9QY48">
    <property type="molecule type" value="protein"/>
</dbReference>
<dbReference type="Bgee" id="ENSMUSG00000028185">
    <property type="expression patterns" value="Expressed in seminal vesicle and 15 other cell types or tissues"/>
</dbReference>
<dbReference type="GO" id="GO:0005737">
    <property type="term" value="C:cytoplasm"/>
    <property type="evidence" value="ECO:0000314"/>
    <property type="project" value="MGI"/>
</dbReference>
<dbReference type="GO" id="GO:0005576">
    <property type="term" value="C:extracellular region"/>
    <property type="evidence" value="ECO:0000314"/>
    <property type="project" value="MGI"/>
</dbReference>
<dbReference type="GO" id="GO:0005764">
    <property type="term" value="C:lysosome"/>
    <property type="evidence" value="ECO:0007669"/>
    <property type="project" value="UniProtKB-SubCell"/>
</dbReference>
<dbReference type="GO" id="GO:0004531">
    <property type="term" value="F:deoxyribonuclease II activity"/>
    <property type="evidence" value="ECO:0007669"/>
    <property type="project" value="UniProtKB-EC"/>
</dbReference>
<dbReference type="GO" id="GO:0004520">
    <property type="term" value="F:DNA endonuclease activity"/>
    <property type="evidence" value="ECO:0000314"/>
    <property type="project" value="MGI"/>
</dbReference>
<dbReference type="CDD" id="cd09192">
    <property type="entry name" value="PLDc_DNaseII_beta_2"/>
    <property type="match status" value="1"/>
</dbReference>
<dbReference type="InterPro" id="IPR004947">
    <property type="entry name" value="DNase_II"/>
</dbReference>
<dbReference type="PANTHER" id="PTHR10858">
    <property type="entry name" value="DEOXYRIBONUCLEASE II"/>
    <property type="match status" value="1"/>
</dbReference>
<dbReference type="PANTHER" id="PTHR10858:SF2">
    <property type="entry name" value="DEOXYRIBONUCLEASE-2-BETA"/>
    <property type="match status" value="1"/>
</dbReference>
<dbReference type="Pfam" id="PF03265">
    <property type="entry name" value="DNase_II"/>
    <property type="match status" value="1"/>
</dbReference>